<evidence type="ECO:0000255" key="1"/>
<evidence type="ECO:0000269" key="2">
    <source>
    </source>
</evidence>
<evidence type="ECO:0000269" key="3">
    <source>
    </source>
</evidence>
<evidence type="ECO:0000269" key="4">
    <source>
    </source>
</evidence>
<evidence type="ECO:0000269" key="5">
    <source>
    </source>
</evidence>
<evidence type="ECO:0000269" key="6">
    <source>
    </source>
</evidence>
<evidence type="ECO:0000269" key="7">
    <source>
    </source>
</evidence>
<evidence type="ECO:0000269" key="8">
    <source>
    </source>
</evidence>
<evidence type="ECO:0000305" key="9"/>
<evidence type="ECO:0007744" key="10">
    <source>
        <dbReference type="PDB" id="4FQX"/>
    </source>
</evidence>
<evidence type="ECO:0007744" key="11">
    <source>
        <dbReference type="PDB" id="4GBX"/>
    </source>
</evidence>
<evidence type="ECO:0007829" key="12">
    <source>
        <dbReference type="PDB" id="2BC4"/>
    </source>
</evidence>
<evidence type="ECO:0007829" key="13">
    <source>
        <dbReference type="PDB" id="4FQX"/>
    </source>
</evidence>
<evidence type="ECO:0007829" key="14">
    <source>
        <dbReference type="PDB" id="4I0P"/>
    </source>
</evidence>
<dbReference type="EMBL" id="Z23139">
    <property type="protein sequence ID" value="CAA80670.1"/>
    <property type="molecule type" value="mRNA"/>
</dbReference>
<dbReference type="EMBL" id="U15085">
    <property type="protein sequence ID" value="AAB60387.1"/>
    <property type="molecule type" value="mRNA"/>
</dbReference>
<dbReference type="EMBL" id="X76776">
    <property type="protein sequence ID" value="CAA54171.1"/>
    <property type="molecule type" value="Genomic_DNA"/>
</dbReference>
<dbReference type="EMBL" id="X87344">
    <property type="protein sequence ID" value="CAA60782.1"/>
    <property type="molecule type" value="Genomic_DNA"/>
</dbReference>
<dbReference type="EMBL" id="AY645722">
    <property type="protein sequence ID" value="AAV97947.1"/>
    <property type="molecule type" value="mRNA"/>
</dbReference>
<dbReference type="EMBL" id="AL662845">
    <property type="status" value="NOT_ANNOTATED_CDS"/>
    <property type="molecule type" value="Genomic_DNA"/>
</dbReference>
<dbReference type="EMBL" id="AL645941">
    <property type="status" value="NOT_ANNOTATED_CDS"/>
    <property type="molecule type" value="Genomic_DNA"/>
</dbReference>
<dbReference type="EMBL" id="AL935042">
    <property type="status" value="NOT_ANNOTATED_CDS"/>
    <property type="molecule type" value="Genomic_DNA"/>
</dbReference>
<dbReference type="EMBL" id="BX088556">
    <property type="status" value="NOT_ANNOTATED_CDS"/>
    <property type="molecule type" value="Genomic_DNA"/>
</dbReference>
<dbReference type="EMBL" id="BX927138">
    <property type="status" value="NOT_ANNOTATED_CDS"/>
    <property type="molecule type" value="Genomic_DNA"/>
</dbReference>
<dbReference type="EMBL" id="CR936913">
    <property type="status" value="NOT_ANNOTATED_CDS"/>
    <property type="molecule type" value="Genomic_DNA"/>
</dbReference>
<dbReference type="EMBL" id="CR759798">
    <property type="status" value="NOT_ANNOTATED_CDS"/>
    <property type="molecule type" value="Genomic_DNA"/>
</dbReference>
<dbReference type="EMBL" id="CR752645">
    <property type="status" value="NOT_ANNOTATED_CDS"/>
    <property type="molecule type" value="Genomic_DNA"/>
</dbReference>
<dbReference type="EMBL" id="CH471081">
    <property type="protein sequence ID" value="EAX03657.1"/>
    <property type="molecule type" value="Genomic_DNA"/>
</dbReference>
<dbReference type="EMBL" id="BC027175">
    <property type="protein sequence ID" value="AAH27175.1"/>
    <property type="molecule type" value="mRNA"/>
</dbReference>
<dbReference type="EMBL" id="Z24750">
    <property type="status" value="NOT_ANNOTATED_CDS"/>
    <property type="molecule type" value="Genomic_DNA"/>
</dbReference>
<dbReference type="EMBL" id="Z24751">
    <property type="status" value="NOT_ANNOTATED_CDS"/>
    <property type="molecule type" value="Genomic_DNA"/>
</dbReference>
<dbReference type="EMBL" id="U00700">
    <property type="protein sequence ID" value="AAA03296.1"/>
    <property type="molecule type" value="Genomic_DNA"/>
</dbReference>
<dbReference type="EMBL" id="U16762">
    <property type="protein sequence ID" value="AAC50514.1"/>
    <property type="molecule type" value="Genomic_DNA"/>
</dbReference>
<dbReference type="EMBL" id="AF134890">
    <property type="protein sequence ID" value="AAD30279.1"/>
    <property type="molecule type" value="Genomic_DNA"/>
</dbReference>
<dbReference type="EMBL" id="AF072680">
    <property type="protein sequence ID" value="AAC26112.1"/>
    <property type="molecule type" value="Genomic_DNA"/>
</dbReference>
<dbReference type="CCDS" id="CCDS4760.1"/>
<dbReference type="PIR" id="I37533">
    <property type="entry name" value="I37533"/>
</dbReference>
<dbReference type="RefSeq" id="NP_002109.2">
    <property type="nucleotide sequence ID" value="NM_002118.5"/>
</dbReference>
<dbReference type="PDB" id="1HDM">
    <property type="method" value="X-ray"/>
    <property type="resolution" value="2.50 A"/>
    <property type="chains" value="B=19-218"/>
</dbReference>
<dbReference type="PDB" id="2BC4">
    <property type="method" value="X-ray"/>
    <property type="resolution" value="2.27 A"/>
    <property type="chains" value="B/D=19-218"/>
</dbReference>
<dbReference type="PDB" id="4FQX">
    <property type="method" value="X-ray"/>
    <property type="resolution" value="2.60 A"/>
    <property type="chains" value="D=19-211"/>
</dbReference>
<dbReference type="PDB" id="4GBX">
    <property type="method" value="X-ray"/>
    <property type="resolution" value="3.00 A"/>
    <property type="chains" value="D=19-211"/>
</dbReference>
<dbReference type="PDB" id="4I0P">
    <property type="method" value="X-ray"/>
    <property type="resolution" value="3.20 A"/>
    <property type="chains" value="B/F=21-211"/>
</dbReference>
<dbReference type="PDBsum" id="1HDM"/>
<dbReference type="PDBsum" id="2BC4"/>
<dbReference type="PDBsum" id="4FQX"/>
<dbReference type="PDBsum" id="4GBX"/>
<dbReference type="PDBsum" id="4I0P"/>
<dbReference type="SMR" id="P28068"/>
<dbReference type="BioGRID" id="109354">
    <property type="interactions" value="65"/>
</dbReference>
<dbReference type="DIP" id="DIP-6185N"/>
<dbReference type="FunCoup" id="P28068">
    <property type="interactions" value="455"/>
</dbReference>
<dbReference type="IntAct" id="P28068">
    <property type="interactions" value="53"/>
</dbReference>
<dbReference type="MINT" id="P28068"/>
<dbReference type="STRING" id="9606.ENSP00000398890"/>
<dbReference type="GlyCosmos" id="P28068">
    <property type="glycosylation" value="1 site, No reported glycans"/>
</dbReference>
<dbReference type="GlyGen" id="P28068">
    <property type="glycosylation" value="1 site, 12 N-linked glycans (1 site)"/>
</dbReference>
<dbReference type="iPTMnet" id="P28068"/>
<dbReference type="PhosphoSitePlus" id="P28068"/>
<dbReference type="BioMuta" id="HLA-DMB"/>
<dbReference type="DMDM" id="133160"/>
<dbReference type="jPOST" id="P28068"/>
<dbReference type="MassIVE" id="P28068"/>
<dbReference type="PaxDb" id="9606-ENSP00000398890"/>
<dbReference type="PeptideAtlas" id="P28068"/>
<dbReference type="ProteomicsDB" id="54443"/>
<dbReference type="Antibodypedia" id="48533">
    <property type="antibodies" value="302 antibodies from 30 providers"/>
</dbReference>
<dbReference type="DNASU" id="3109"/>
<dbReference type="Ensembl" id="ENST00000383231.6">
    <property type="protein sequence ID" value="ENSP00000372718.2"/>
    <property type="gene ID" value="ENSG00000241674.8"/>
</dbReference>
<dbReference type="Ensembl" id="ENST00000395312.7">
    <property type="protein sequence ID" value="ENSP00000378723.3"/>
    <property type="gene ID" value="ENSG00000242092.8"/>
</dbReference>
<dbReference type="Ensembl" id="ENST00000412948.6">
    <property type="protein sequence ID" value="ENSP00000413471.2"/>
    <property type="gene ID" value="ENSG00000241296.8"/>
</dbReference>
<dbReference type="Ensembl" id="ENST00000418107.3">
    <property type="protein sequence ID" value="ENSP00000398890.2"/>
    <property type="gene ID" value="ENSG00000242574.9"/>
</dbReference>
<dbReference type="Ensembl" id="ENST00000424822.6">
    <property type="protein sequence ID" value="ENSP00000414817.2"/>
    <property type="gene ID" value="ENSG00000234154.10"/>
</dbReference>
<dbReference type="Ensembl" id="ENST00000428420.6">
    <property type="protein sequence ID" value="ENSP00000393646.2"/>
    <property type="gene ID" value="ENSG00000239329.8"/>
</dbReference>
<dbReference type="Ensembl" id="ENST00000440078.6">
    <property type="protein sequence ID" value="ENSP00000411321.2"/>
    <property type="gene ID" value="ENSG00000226264.10"/>
</dbReference>
<dbReference type="Ensembl" id="ENST00000450897.6">
    <property type="protein sequence ID" value="ENSP00000408453.2"/>
    <property type="gene ID" value="ENSG00000242386.8"/>
</dbReference>
<dbReference type="GeneID" id="3109"/>
<dbReference type="KEGG" id="hsa:3109"/>
<dbReference type="MANE-Select" id="ENST00000418107.3">
    <property type="protein sequence ID" value="ENSP00000398890.2"/>
    <property type="RefSeq nucleotide sequence ID" value="NM_002118.5"/>
    <property type="RefSeq protein sequence ID" value="NP_002109.2"/>
</dbReference>
<dbReference type="UCSC" id="uc003ocl.2">
    <property type="organism name" value="human"/>
</dbReference>
<dbReference type="AGR" id="HGNC:4935"/>
<dbReference type="CTD" id="3109"/>
<dbReference type="DisGeNET" id="3109"/>
<dbReference type="GeneCards" id="HLA-DMB"/>
<dbReference type="HGNC" id="HGNC:4935">
    <property type="gene designation" value="HLA-DMB"/>
</dbReference>
<dbReference type="HPA" id="ENSG00000242574">
    <property type="expression patterns" value="Tissue enhanced (intestine, lymphoid tissue)"/>
</dbReference>
<dbReference type="MIM" id="142856">
    <property type="type" value="gene"/>
</dbReference>
<dbReference type="neXtProt" id="NX_P28068"/>
<dbReference type="OpenTargets" id="ENSG00000242574"/>
<dbReference type="PharmGKB" id="PA35059"/>
<dbReference type="VEuPathDB" id="HostDB:ENSG00000242574"/>
<dbReference type="eggNOG" id="ENOG502SAA4">
    <property type="taxonomic scope" value="Eukaryota"/>
</dbReference>
<dbReference type="GeneTree" id="ENSGT00940000160381"/>
<dbReference type="HOGENOM" id="CLU_092834_0_0_1"/>
<dbReference type="InParanoid" id="P28068"/>
<dbReference type="OMA" id="TYCVAYN"/>
<dbReference type="OrthoDB" id="9940220at2759"/>
<dbReference type="PAN-GO" id="P28068">
    <property type="GO annotations" value="8 GO annotations based on evolutionary models"/>
</dbReference>
<dbReference type="PhylomeDB" id="P28068"/>
<dbReference type="TreeFam" id="TF335727"/>
<dbReference type="PathwayCommons" id="P28068"/>
<dbReference type="Reactome" id="R-HSA-2132295">
    <property type="pathway name" value="MHC class II antigen presentation"/>
</dbReference>
<dbReference type="SignaLink" id="P28068"/>
<dbReference type="SIGNOR" id="P28068"/>
<dbReference type="BioGRID-ORCS" id="3109">
    <property type="hits" value="11 hits in 1138 CRISPR screens"/>
</dbReference>
<dbReference type="ChiTaRS" id="HLA-DMB">
    <property type="organism name" value="human"/>
</dbReference>
<dbReference type="EvolutionaryTrace" id="P28068"/>
<dbReference type="GeneWiki" id="HLA-DMB"/>
<dbReference type="GenomeRNAi" id="3109"/>
<dbReference type="Pharos" id="P28068">
    <property type="development level" value="Tbio"/>
</dbReference>
<dbReference type="PRO" id="PR:P28068"/>
<dbReference type="Proteomes" id="UP000005640">
    <property type="component" value="Chromosome 6"/>
</dbReference>
<dbReference type="RNAct" id="P28068">
    <property type="molecule type" value="protein"/>
</dbReference>
<dbReference type="Bgee" id="ENSG00000242574">
    <property type="expression patterns" value="Expressed in monocyte and 101 other cell types or tissues"/>
</dbReference>
<dbReference type="ExpressionAtlas" id="P28068">
    <property type="expression patterns" value="baseline and differential"/>
</dbReference>
<dbReference type="GO" id="GO:0043231">
    <property type="term" value="C:intracellular membrane-bounded organelle"/>
    <property type="evidence" value="ECO:0000314"/>
    <property type="project" value="HPA"/>
</dbReference>
<dbReference type="GO" id="GO:0031902">
    <property type="term" value="C:late endosome membrane"/>
    <property type="evidence" value="ECO:0000314"/>
    <property type="project" value="UniProtKB"/>
</dbReference>
<dbReference type="GO" id="GO:0005765">
    <property type="term" value="C:lysosomal membrane"/>
    <property type="evidence" value="ECO:0000314"/>
    <property type="project" value="UniProtKB"/>
</dbReference>
<dbReference type="GO" id="GO:0042613">
    <property type="term" value="C:MHC class II protein complex"/>
    <property type="evidence" value="ECO:0000314"/>
    <property type="project" value="UniProtKB"/>
</dbReference>
<dbReference type="GO" id="GO:0023026">
    <property type="term" value="F:MHC class II protein complex binding"/>
    <property type="evidence" value="ECO:0000314"/>
    <property type="project" value="UniProtKB"/>
</dbReference>
<dbReference type="GO" id="GO:0042605">
    <property type="term" value="F:peptide antigen binding"/>
    <property type="evidence" value="ECO:0000318"/>
    <property type="project" value="GO_Central"/>
</dbReference>
<dbReference type="GO" id="GO:0002250">
    <property type="term" value="P:adaptive immune response"/>
    <property type="evidence" value="ECO:0007669"/>
    <property type="project" value="UniProtKB-KW"/>
</dbReference>
<dbReference type="GO" id="GO:0019886">
    <property type="term" value="P:antigen processing and presentation of exogenous peptide antigen via MHC class II"/>
    <property type="evidence" value="ECO:0000315"/>
    <property type="project" value="UniProtKB"/>
</dbReference>
<dbReference type="GO" id="GO:0002399">
    <property type="term" value="P:MHC class II protein complex assembly"/>
    <property type="evidence" value="ECO:0000315"/>
    <property type="project" value="UniProtKB"/>
</dbReference>
<dbReference type="GO" id="GO:0002503">
    <property type="term" value="P:peptide antigen assembly with MHC class II protein complex"/>
    <property type="evidence" value="ECO:0000314"/>
    <property type="project" value="UniProtKB"/>
</dbReference>
<dbReference type="GO" id="GO:0050778">
    <property type="term" value="P:positive regulation of immune response"/>
    <property type="evidence" value="ECO:0000318"/>
    <property type="project" value="GO_Central"/>
</dbReference>
<dbReference type="GO" id="GO:0050870">
    <property type="term" value="P:positive regulation of T cell activation"/>
    <property type="evidence" value="ECO:0000318"/>
    <property type="project" value="GO_Central"/>
</dbReference>
<dbReference type="GO" id="GO:2001190">
    <property type="term" value="P:positive regulation of T cell activation via T cell receptor contact with antigen bound to MHC molecule on antigen presenting cell"/>
    <property type="evidence" value="ECO:0000315"/>
    <property type="project" value="UniProtKB"/>
</dbReference>
<dbReference type="GO" id="GO:0042102">
    <property type="term" value="P:positive regulation of T cell proliferation"/>
    <property type="evidence" value="ECO:0000315"/>
    <property type="project" value="UniProtKB"/>
</dbReference>
<dbReference type="CDD" id="cd21002">
    <property type="entry name" value="IgC1_MHC_II_beta_HLA-DM"/>
    <property type="match status" value="1"/>
</dbReference>
<dbReference type="FunFam" id="2.60.40.10:FF:000968">
    <property type="entry name" value="MHC class II H2-M beta 2 chain"/>
    <property type="match status" value="1"/>
</dbReference>
<dbReference type="FunFam" id="3.10.320.10:FF:000004">
    <property type="entry name" value="MHC class II H2-M beta 2 chain"/>
    <property type="match status" value="1"/>
</dbReference>
<dbReference type="Gene3D" id="3.10.320.10">
    <property type="entry name" value="Class II Histocompatibility Antigen, M Beta Chain, Chain B, domain 1"/>
    <property type="match status" value="1"/>
</dbReference>
<dbReference type="Gene3D" id="2.60.40.10">
    <property type="entry name" value="Immunoglobulins"/>
    <property type="match status" value="1"/>
</dbReference>
<dbReference type="InterPro" id="IPR007110">
    <property type="entry name" value="Ig-like_dom"/>
</dbReference>
<dbReference type="InterPro" id="IPR036179">
    <property type="entry name" value="Ig-like_dom_sf"/>
</dbReference>
<dbReference type="InterPro" id="IPR013783">
    <property type="entry name" value="Ig-like_fold"/>
</dbReference>
<dbReference type="InterPro" id="IPR003006">
    <property type="entry name" value="Ig/MHC_CS"/>
</dbReference>
<dbReference type="InterPro" id="IPR003597">
    <property type="entry name" value="Ig_C1-set"/>
</dbReference>
<dbReference type="InterPro" id="IPR050160">
    <property type="entry name" value="MHC/Immunoglobulin"/>
</dbReference>
<dbReference type="InterPro" id="IPR011162">
    <property type="entry name" value="MHC_I/II-like_Ag-recog"/>
</dbReference>
<dbReference type="InterPro" id="IPR014745">
    <property type="entry name" value="MHC_II_a/b_N"/>
</dbReference>
<dbReference type="InterPro" id="IPR000353">
    <property type="entry name" value="MHC_II_b_N"/>
</dbReference>
<dbReference type="PANTHER" id="PTHR19944:SF65">
    <property type="entry name" value="HLA CLASS II HISTOCOMPATIBILITY ANTIGEN, DM BETA CHAIN"/>
    <property type="match status" value="1"/>
</dbReference>
<dbReference type="PANTHER" id="PTHR19944">
    <property type="entry name" value="MHC CLASS II-RELATED"/>
    <property type="match status" value="1"/>
</dbReference>
<dbReference type="Pfam" id="PF07654">
    <property type="entry name" value="C1-set"/>
    <property type="match status" value="1"/>
</dbReference>
<dbReference type="Pfam" id="PF00969">
    <property type="entry name" value="MHC_II_beta"/>
    <property type="match status" value="1"/>
</dbReference>
<dbReference type="SMART" id="SM00407">
    <property type="entry name" value="IGc1"/>
    <property type="match status" value="1"/>
</dbReference>
<dbReference type="SMART" id="SM00921">
    <property type="entry name" value="MHC_II_beta"/>
    <property type="match status" value="1"/>
</dbReference>
<dbReference type="SUPFAM" id="SSF48726">
    <property type="entry name" value="Immunoglobulin"/>
    <property type="match status" value="1"/>
</dbReference>
<dbReference type="SUPFAM" id="SSF54452">
    <property type="entry name" value="MHC antigen-recognition domain"/>
    <property type="match status" value="1"/>
</dbReference>
<dbReference type="PROSITE" id="PS50835">
    <property type="entry name" value="IG_LIKE"/>
    <property type="match status" value="1"/>
</dbReference>
<dbReference type="PROSITE" id="PS00290">
    <property type="entry name" value="IG_MHC"/>
    <property type="match status" value="1"/>
</dbReference>
<feature type="signal peptide" evidence="1">
    <location>
        <begin position="1"/>
        <end position="18"/>
    </location>
</feature>
<feature type="chain" id="PRO_0000018960" description="HLA class II histocompatibility antigen, DM beta chain">
    <location>
        <begin position="19"/>
        <end position="263"/>
    </location>
</feature>
<feature type="topological domain" description="Lumenal" evidence="1">
    <location>
        <begin position="19"/>
        <end position="218"/>
    </location>
</feature>
<feature type="transmembrane region" description="Helical" evidence="1">
    <location>
        <begin position="219"/>
        <end position="239"/>
    </location>
</feature>
<feature type="topological domain" description="Cytoplasmic" evidence="1">
    <location>
        <begin position="240"/>
        <end position="263"/>
    </location>
</feature>
<feature type="domain" description="Ig-like C1-type">
    <location>
        <begin position="114"/>
        <end position="208"/>
    </location>
</feature>
<feature type="region of interest" description="Beta-1">
    <location>
        <begin position="19"/>
        <end position="112"/>
    </location>
</feature>
<feature type="region of interest" description="Beta-2">
    <location>
        <begin position="113"/>
        <end position="207"/>
    </location>
</feature>
<feature type="region of interest" description="Connecting peptide" evidence="1">
    <location>
        <begin position="208"/>
        <end position="218"/>
    </location>
</feature>
<feature type="short sequence motif" description="YXXZ motif">
    <location>
        <begin position="248"/>
        <end position="251"/>
    </location>
</feature>
<feature type="glycosylation site" description="N-linked (GlcNAc...) asparagine" evidence="3">
    <location>
        <position position="110"/>
    </location>
</feature>
<feature type="disulfide bond" evidence="5 11">
    <location>
        <begin position="29"/>
        <end position="97"/>
    </location>
</feature>
<feature type="disulfide bond" evidence="5 11">
    <location>
        <begin position="43"/>
        <end position="53"/>
    </location>
</feature>
<feature type="disulfide bond" evidence="5 11">
    <location>
        <begin position="135"/>
        <end position="192"/>
    </location>
</feature>
<feature type="sequence variant" id="VAR_050360" description="In allele DMB*01:07; dbSNP:rs17583782.">
    <original>T</original>
    <variation>A</variation>
    <location>
        <position position="28"/>
    </location>
</feature>
<feature type="sequence variant" id="VAR_016752" description="In allele DMB*01:06; dbSNP:rs41560814.">
    <original>S</original>
    <variation>F</variation>
    <location>
        <position position="45"/>
    </location>
</feature>
<feature type="sequence variant" id="VAR_050361" description="In allele DMB*01:07; dbSNP:rs17617333.">
    <original>D</original>
    <variation>V</variation>
    <location>
        <position position="49"/>
    </location>
</feature>
<feature type="sequence variant" id="VAR_050362" description="In allele DMB*01:07; dbSNP:rs17617321.">
    <original>S</original>
    <variation>N</variation>
    <location>
        <position position="71"/>
    </location>
</feature>
<feature type="sequence variant" id="VAR_016753" description="In allele DMB*01:02 and allele DMB*01:06; dbSNP:rs2071555.">
    <original>A</original>
    <variation>E</variation>
    <location>
        <position position="162"/>
    </location>
</feature>
<feature type="sequence variant" id="VAR_016754" description="In allele DMB*01:04 and allele DMB*01:05; dbSNP:rs2071555.">
    <original>A</original>
    <variation>V</variation>
    <location>
        <position position="162"/>
    </location>
</feature>
<feature type="sequence variant" id="VAR_016755" description="In allele DMB*01:01; dbSNP:rs1042337." evidence="2">
    <original>T</original>
    <variation>I</variation>
    <location>
        <position position="197"/>
    </location>
</feature>
<feature type="mutagenesis site" description="Decreases the interaction with MHCII and peptide exchange." evidence="5">
    <original>E</original>
    <variation>K</variation>
    <location>
        <position position="26"/>
    </location>
</feature>
<feature type="mutagenesis site" description="Decreases the interaction with MHCII and peptide exchange." evidence="5">
    <original>D</original>
    <variation>K</variation>
    <location>
        <position position="49"/>
    </location>
</feature>
<feature type="mutagenesis site" description="Increases the interaction with MHCII and peptide exchange; when associated with Q-65." evidence="5">
    <original>D</original>
    <variation>N</variation>
    <location>
        <position position="49"/>
    </location>
</feature>
<feature type="mutagenesis site" description="Increases the interaction with MHCII and peptide exchange; when associated with N-49." evidence="5">
    <original>E</original>
    <variation>Q</variation>
    <location>
        <position position="65"/>
    </location>
</feature>
<feature type="mutagenesis site" description="Decreases the interaction with MHCII and peptide exchange." evidence="5">
    <original>E</original>
    <variation>R</variation>
    <location>
        <position position="65"/>
    </location>
</feature>
<feature type="mutagenesis site" description="Decreases the interaction with MHCII and peptide exchange." evidence="5">
    <original>L</original>
    <variation>D</variation>
    <location>
        <position position="69"/>
    </location>
</feature>
<feature type="mutagenesis site" description="Decreases the interaction with MHCII and peptide exchange." evidence="5">
    <original>A</original>
    <variation>V</variation>
    <location>
        <position position="73"/>
    </location>
</feature>
<feature type="mutagenesis site" description="Decreases the interaction with MHCII and peptide exchange." evidence="5">
    <original>R</original>
    <variation>S</variation>
    <location>
        <position position="128"/>
    </location>
</feature>
<feature type="mutagenesis site" description="Abolishes targeting to endosomes and results in relocalization to the cell membrane." evidence="6">
    <original>Y</original>
    <variation>A</variation>
    <location>
        <position position="248"/>
    </location>
</feature>
<feature type="mutagenesis site" description="Abolishes targeting to endosomes and results in relocalization to the cell membrane." evidence="6">
    <original>L</original>
    <variation>A</variation>
    <location>
        <position position="251"/>
    </location>
</feature>
<feature type="strand" evidence="12">
    <location>
        <begin position="22"/>
        <end position="32"/>
    </location>
</feature>
<feature type="strand" evidence="13">
    <location>
        <begin position="33"/>
        <end position="35"/>
    </location>
</feature>
<feature type="strand" evidence="12">
    <location>
        <begin position="37"/>
        <end position="46"/>
    </location>
</feature>
<feature type="strand" evidence="12">
    <location>
        <begin position="49"/>
        <end position="55"/>
    </location>
</feature>
<feature type="turn" evidence="12">
    <location>
        <begin position="56"/>
        <end position="59"/>
    </location>
</feature>
<feature type="strand" evidence="12">
    <location>
        <begin position="60"/>
        <end position="63"/>
    </location>
</feature>
<feature type="strand" evidence="14">
    <location>
        <begin position="67"/>
        <end position="69"/>
    </location>
</feature>
<feature type="helix" evidence="12">
    <location>
        <begin position="70"/>
        <end position="81"/>
    </location>
</feature>
<feature type="helix" evidence="12">
    <location>
        <begin position="84"/>
        <end position="91"/>
    </location>
</feature>
<feature type="helix" evidence="12">
    <location>
        <begin position="93"/>
        <end position="109"/>
    </location>
</feature>
<feature type="strand" evidence="12">
    <location>
        <begin position="116"/>
        <end position="121"/>
    </location>
</feature>
<feature type="strand" evidence="12">
    <location>
        <begin position="128"/>
        <end position="143"/>
    </location>
</feature>
<feature type="strand" evidence="12">
    <location>
        <begin position="146"/>
        <end position="151"/>
    </location>
</feature>
<feature type="strand" evidence="12">
    <location>
        <begin position="154"/>
        <end position="156"/>
    </location>
</feature>
<feature type="strand" evidence="12">
    <location>
        <begin position="170"/>
        <end position="172"/>
    </location>
</feature>
<feature type="strand" evidence="12">
    <location>
        <begin position="174"/>
        <end position="182"/>
    </location>
</feature>
<feature type="strand" evidence="12">
    <location>
        <begin position="190"/>
        <end position="195"/>
    </location>
</feature>
<feature type="strand" evidence="12">
    <location>
        <begin position="199"/>
        <end position="201"/>
    </location>
</feature>
<feature type="strand" evidence="12">
    <location>
        <begin position="203"/>
        <end position="207"/>
    </location>
</feature>
<feature type="helix" evidence="12">
    <location>
        <begin position="212"/>
        <end position="214"/>
    </location>
</feature>
<keyword id="KW-0002">3D-structure</keyword>
<keyword id="KW-1064">Adaptive immunity</keyword>
<keyword id="KW-1015">Disulfide bond</keyword>
<keyword id="KW-0967">Endosome</keyword>
<keyword id="KW-0325">Glycoprotein</keyword>
<keyword id="KW-0391">Immunity</keyword>
<keyword id="KW-0393">Immunoglobulin domain</keyword>
<keyword id="KW-0458">Lysosome</keyword>
<keyword id="KW-0472">Membrane</keyword>
<keyword id="KW-0491">MHC II</keyword>
<keyword id="KW-1267">Proteomics identification</keyword>
<keyword id="KW-1185">Reference proteome</keyword>
<keyword id="KW-0732">Signal</keyword>
<keyword id="KW-0812">Transmembrane</keyword>
<keyword id="KW-1133">Transmembrane helix</keyword>
<sequence>MITFLPLLLGLSLGCTGAGGFVAHVESTCLLDDAGTPKDFTYCISFNKDLLTCWDPEENKMAPCEFGVLNSLANVLSQHLNQKDTLMQRLRNGLQNCATHTQPFWGSLTNRTRPPSVQVAKTTPFNTREPVMLACYVWGFYPAEVTITWRKNGKLVMPHSSAHKTAQPNGDWTYQTLSHLALTPSYGDTYTCVVEHTGAPEPILRDWTPGLSPMQTLKVSVSAVTLGLGLIIFSLGVISWRRAGHSSYTPLPGSNYSEGWHIS</sequence>
<reference key="1">
    <citation type="journal article" date="1991" name="Nature">
        <title>A new human HLA class II-related locus, DM.</title>
        <authorList>
            <person name="Kelly A.P."/>
            <person name="Monaco J.J."/>
            <person name="Cho S."/>
            <person name="Trowsdale J."/>
        </authorList>
    </citation>
    <scope>NUCLEOTIDE SEQUENCE [MRNA] (ALLELE DMB*01:01)</scope>
</reference>
<reference key="2">
    <citation type="journal article" date="1994" name="J. Biol. Chem.">
        <title>Genomic organization of HLA-DMA and HLA-DMB. Comparison of the gene organization of all six class II families in the human major histocompatibility complex.</title>
        <authorList>
            <person name="Radley E."/>
            <person name="Alderton R.P."/>
            <person name="Kelly A."/>
            <person name="Trowsdale J."/>
            <person name="Beck S."/>
        </authorList>
    </citation>
    <scope>NUCLEOTIDE SEQUENCE [GENOMIC DNA] (ALLELE DMB*01:01)</scope>
</reference>
<reference key="3">
    <citation type="journal article" date="1996" name="J. Mol. Biol.">
        <title>Evolutionary dynamics of non-coding sequences within the class II region of the human MHC.</title>
        <authorList>
            <person name="Beck S."/>
            <person name="Abdulla S."/>
            <person name="Alderton R.P."/>
            <person name="Glynne R.J."/>
            <person name="Gut I.G."/>
            <person name="Hosking L.K."/>
            <person name="Jackson A."/>
            <person name="Kelly A."/>
            <person name="Newell W.R."/>
            <person name="Sanseau P."/>
            <person name="Radley E."/>
            <person name="Thorpe K.L."/>
            <person name="Trowsdale J."/>
        </authorList>
    </citation>
    <scope>NUCLEOTIDE SEQUENCE [GENOMIC DNA] (ALLELE DMB*01:01)</scope>
</reference>
<reference key="4">
    <citation type="journal article" date="2005" name="Tissue Antigens">
        <title>Identification of a novel HLA-DMB allele (DMB*0107) in the Korean population.</title>
        <authorList>
            <person name="Gu H."/>
            <person name="Moon S.-M."/>
            <person name="Kim J.-J."/>
            <person name="Ryu H.-J."/>
            <person name="Kwack K."/>
            <person name="Kimm K."/>
            <person name="Lee J.-K."/>
            <person name="Oh B."/>
        </authorList>
    </citation>
    <scope>NUCLEOTIDE SEQUENCE [MRNA] (ALLELE DMB*01:07)</scope>
</reference>
<reference key="5">
    <citation type="journal article" date="2003" name="Nature">
        <title>The DNA sequence and analysis of human chromosome 6.</title>
        <authorList>
            <person name="Mungall A.J."/>
            <person name="Palmer S.A."/>
            <person name="Sims S.K."/>
            <person name="Edwards C.A."/>
            <person name="Ashurst J.L."/>
            <person name="Wilming L."/>
            <person name="Jones M.C."/>
            <person name="Horton R."/>
            <person name="Hunt S.E."/>
            <person name="Scott C.E."/>
            <person name="Gilbert J.G.R."/>
            <person name="Clamp M.E."/>
            <person name="Bethel G."/>
            <person name="Milne S."/>
            <person name="Ainscough R."/>
            <person name="Almeida J.P."/>
            <person name="Ambrose K.D."/>
            <person name="Andrews T.D."/>
            <person name="Ashwell R.I.S."/>
            <person name="Babbage A.K."/>
            <person name="Bagguley C.L."/>
            <person name="Bailey J."/>
            <person name="Banerjee R."/>
            <person name="Barker D.J."/>
            <person name="Barlow K.F."/>
            <person name="Bates K."/>
            <person name="Beare D.M."/>
            <person name="Beasley H."/>
            <person name="Beasley O."/>
            <person name="Bird C.P."/>
            <person name="Blakey S.E."/>
            <person name="Bray-Allen S."/>
            <person name="Brook J."/>
            <person name="Brown A.J."/>
            <person name="Brown J.Y."/>
            <person name="Burford D.C."/>
            <person name="Burrill W."/>
            <person name="Burton J."/>
            <person name="Carder C."/>
            <person name="Carter N.P."/>
            <person name="Chapman J.C."/>
            <person name="Clark S.Y."/>
            <person name="Clark G."/>
            <person name="Clee C.M."/>
            <person name="Clegg S."/>
            <person name="Cobley V."/>
            <person name="Collier R.E."/>
            <person name="Collins J.E."/>
            <person name="Colman L.K."/>
            <person name="Corby N.R."/>
            <person name="Coville G.J."/>
            <person name="Culley K.M."/>
            <person name="Dhami P."/>
            <person name="Davies J."/>
            <person name="Dunn M."/>
            <person name="Earthrowl M.E."/>
            <person name="Ellington A.E."/>
            <person name="Evans K.A."/>
            <person name="Faulkner L."/>
            <person name="Francis M.D."/>
            <person name="Frankish A."/>
            <person name="Frankland J."/>
            <person name="French L."/>
            <person name="Garner P."/>
            <person name="Garnett J."/>
            <person name="Ghori M.J."/>
            <person name="Gilby L.M."/>
            <person name="Gillson C.J."/>
            <person name="Glithero R.J."/>
            <person name="Grafham D.V."/>
            <person name="Grant M."/>
            <person name="Gribble S."/>
            <person name="Griffiths C."/>
            <person name="Griffiths M.N.D."/>
            <person name="Hall R."/>
            <person name="Halls K.S."/>
            <person name="Hammond S."/>
            <person name="Harley J.L."/>
            <person name="Hart E.A."/>
            <person name="Heath P.D."/>
            <person name="Heathcott R."/>
            <person name="Holmes S.J."/>
            <person name="Howden P.J."/>
            <person name="Howe K.L."/>
            <person name="Howell G.R."/>
            <person name="Huckle E."/>
            <person name="Humphray S.J."/>
            <person name="Humphries M.D."/>
            <person name="Hunt A.R."/>
            <person name="Johnson C.M."/>
            <person name="Joy A.A."/>
            <person name="Kay M."/>
            <person name="Keenan S.J."/>
            <person name="Kimberley A.M."/>
            <person name="King A."/>
            <person name="Laird G.K."/>
            <person name="Langford C."/>
            <person name="Lawlor S."/>
            <person name="Leongamornlert D.A."/>
            <person name="Leversha M."/>
            <person name="Lloyd C.R."/>
            <person name="Lloyd D.M."/>
            <person name="Loveland J.E."/>
            <person name="Lovell J."/>
            <person name="Martin S."/>
            <person name="Mashreghi-Mohammadi M."/>
            <person name="Maslen G.L."/>
            <person name="Matthews L."/>
            <person name="McCann O.T."/>
            <person name="McLaren S.J."/>
            <person name="McLay K."/>
            <person name="McMurray A."/>
            <person name="Moore M.J.F."/>
            <person name="Mullikin J.C."/>
            <person name="Niblett D."/>
            <person name="Nickerson T."/>
            <person name="Novik K.L."/>
            <person name="Oliver K."/>
            <person name="Overton-Larty E.K."/>
            <person name="Parker A."/>
            <person name="Patel R."/>
            <person name="Pearce A.V."/>
            <person name="Peck A.I."/>
            <person name="Phillimore B.J.C.T."/>
            <person name="Phillips S."/>
            <person name="Plumb R.W."/>
            <person name="Porter K.M."/>
            <person name="Ramsey Y."/>
            <person name="Ranby S.A."/>
            <person name="Rice C.M."/>
            <person name="Ross M.T."/>
            <person name="Searle S.M."/>
            <person name="Sehra H.K."/>
            <person name="Sheridan E."/>
            <person name="Skuce C.D."/>
            <person name="Smith S."/>
            <person name="Smith M."/>
            <person name="Spraggon L."/>
            <person name="Squares S.L."/>
            <person name="Steward C.A."/>
            <person name="Sycamore N."/>
            <person name="Tamlyn-Hall G."/>
            <person name="Tester J."/>
            <person name="Theaker A.J."/>
            <person name="Thomas D.W."/>
            <person name="Thorpe A."/>
            <person name="Tracey A."/>
            <person name="Tromans A."/>
            <person name="Tubby B."/>
            <person name="Wall M."/>
            <person name="Wallis J.M."/>
            <person name="West A.P."/>
            <person name="White S.S."/>
            <person name="Whitehead S.L."/>
            <person name="Whittaker H."/>
            <person name="Wild A."/>
            <person name="Willey D.J."/>
            <person name="Wilmer T.E."/>
            <person name="Wood J.M."/>
            <person name="Wray P.W."/>
            <person name="Wyatt J.C."/>
            <person name="Young L."/>
            <person name="Younger R.M."/>
            <person name="Bentley D.R."/>
            <person name="Coulson A."/>
            <person name="Durbin R.M."/>
            <person name="Hubbard T."/>
            <person name="Sulston J.E."/>
            <person name="Dunham I."/>
            <person name="Rogers J."/>
            <person name="Beck S."/>
        </authorList>
    </citation>
    <scope>NUCLEOTIDE SEQUENCE [LARGE SCALE GENOMIC DNA] (ALLELE DMB*01:03)</scope>
</reference>
<reference key="6">
    <citation type="submission" date="2005-07" db="EMBL/GenBank/DDBJ databases">
        <authorList>
            <person name="Mural R.J."/>
            <person name="Istrail S."/>
            <person name="Sutton G.G."/>
            <person name="Florea L."/>
            <person name="Halpern A.L."/>
            <person name="Mobarry C.M."/>
            <person name="Lippert R."/>
            <person name="Walenz B."/>
            <person name="Shatkay H."/>
            <person name="Dew I."/>
            <person name="Miller J.R."/>
            <person name="Flanigan M.J."/>
            <person name="Edwards N.J."/>
            <person name="Bolanos R."/>
            <person name="Fasulo D."/>
            <person name="Halldorsson B.V."/>
            <person name="Hannenhalli S."/>
            <person name="Turner R."/>
            <person name="Yooseph S."/>
            <person name="Lu F."/>
            <person name="Nusskern D.R."/>
            <person name="Shue B.C."/>
            <person name="Zheng X.H."/>
            <person name="Zhong F."/>
            <person name="Delcher A.L."/>
            <person name="Huson D.H."/>
            <person name="Kravitz S.A."/>
            <person name="Mouchard L."/>
            <person name="Reinert K."/>
            <person name="Remington K.A."/>
            <person name="Clark A.G."/>
            <person name="Waterman M.S."/>
            <person name="Eichler E.E."/>
            <person name="Adams M.D."/>
            <person name="Hunkapiller M.W."/>
            <person name="Myers E.W."/>
            <person name="Venter J.C."/>
        </authorList>
    </citation>
    <scope>NUCLEOTIDE SEQUENCE [LARGE SCALE GENOMIC DNA]</scope>
</reference>
<reference key="7">
    <citation type="journal article" date="2004" name="Genome Res.">
        <title>The status, quality, and expansion of the NIH full-length cDNA project: the Mammalian Gene Collection (MGC).</title>
        <authorList>
            <consortium name="The MGC Project Team"/>
        </authorList>
    </citation>
    <scope>NUCLEOTIDE SEQUENCE [LARGE SCALE MRNA] (ALLELE DMB*01:01)</scope>
    <source>
        <tissue>Lymph</tissue>
    </source>
</reference>
<reference key="8">
    <citation type="journal article" date="1994" name="Immunogenetics">
        <title>Limited polymorphism in HLA-DM does not involve the peptide binding groove.</title>
        <authorList>
            <person name="Sanderson F."/>
            <person name="Powis S.H."/>
            <person name="Kelly A.P."/>
            <person name="Trowsdale J."/>
        </authorList>
    </citation>
    <scope>NUCLEOTIDE SEQUENCE [GENOMIC DNA] OF 114-207 (ALLELES DMB*01:02 AND DMB*01:03)</scope>
</reference>
<reference key="9">
    <citation type="journal article" date="1993" name="Immunogenetics">
        <title>Characterization of HLA-DMB polymorphism.</title>
        <authorList>
            <person name="Carrington M."/>
            <person name="Yeager M."/>
            <person name="Mann D."/>
        </authorList>
    </citation>
    <scope>NUCLEOTIDE SEQUENCE [GENOMIC DNA] OF 121-200 (ALLELE DMB*01:04)</scope>
</reference>
<reference key="10">
    <citation type="journal article" date="1996" name="Hum. Immunol.">
        <title>Three HLA-DMB variants in Korean patients with autoimmune diseases.</title>
        <authorList>
            <person name="Kim T.-G."/>
            <person name="Carrington M."/>
            <person name="Choi H.B."/>
            <person name="Kim H.Y."/>
            <person name="Han H."/>
        </authorList>
    </citation>
    <scope>NUCLEOTIDE SEQUENCE [GENOMIC DNA] OF 113-207 (ALLELE DMB*01:05)</scope>
    <source>
        <tissue>Blood</tissue>
    </source>
</reference>
<reference key="11">
    <citation type="journal article" date="2000" name="Tissue Antigens">
        <title>The nucleotide sequence of a new DMB allele, DMB*0106.</title>
        <authorList>
            <person name="McTernan C.L."/>
            <person name="Mijovic C.H."/>
            <person name="Cockram C.S."/>
            <person name="Barnett A.H."/>
        </authorList>
    </citation>
    <scope>NUCLEOTIDE SEQUENCE [GENOMIC DNA] OF 19-112 AND 152-207 (ALLELE DMB*01:06)</scope>
</reference>
<reference key="12">
    <citation type="journal article" date="1996" name="Science">
        <title>Enhanced dissociation of HLA-DR-bound peptides in the presence of HLA-DM.</title>
        <authorList>
            <person name="Weber D.A."/>
            <person name="Evavold B.D."/>
            <person name="Jensen P.E."/>
        </authorList>
    </citation>
    <scope>FUNCTION</scope>
</reference>
<reference key="13">
    <citation type="journal article" date="1996" name="J. Immunol.">
        <title>Targeting signal and subcellular compartments involved in the intracellular trafficking of HLA-DMB.</title>
        <authorList>
            <person name="Copier J."/>
            <person name="Kleijmeer M.J."/>
            <person name="Ponnambalam S."/>
            <person name="Oorschot V."/>
            <person name="Potter P."/>
            <person name="Trowsdale J."/>
            <person name="Kelly A."/>
        </authorList>
    </citation>
    <scope>SUBCELLULAR LOCATION</scope>
    <scope>MUTAGENESIS OF TYR-248 AND LEU-251</scope>
</reference>
<reference key="14">
    <citation type="journal article" date="2005" name="J. Proteome Res.">
        <title>Human plasma N-glycoproteome analysis by immunoaffinity subtraction, hydrazide chemistry, and mass spectrometry.</title>
        <authorList>
            <person name="Liu T."/>
            <person name="Qian W.-J."/>
            <person name="Gritsenko M.A."/>
            <person name="Camp D.G. II"/>
            <person name="Monroe M.E."/>
            <person name="Moore R.J."/>
            <person name="Smith R.D."/>
        </authorList>
    </citation>
    <scope>GLYCOSYLATION [LARGE SCALE ANALYSIS] AT ASN-110</scope>
    <source>
        <tissue>Plasma</tissue>
    </source>
</reference>
<reference key="15">
    <citation type="journal article" date="1998" name="Immunity">
        <title>The structure of HLA-DM, the peptide exchange catalyst that loads antigen onto class II MHC molecules during antigen presentation.</title>
        <authorList>
            <person name="Mosyak L."/>
            <person name="Zaller D.M."/>
            <person name="Wiley D.C."/>
        </authorList>
    </citation>
    <scope>X-RAY CRYSTALLOGRAPHY (2.5 ANGSTROMS) OF 19-218 IN COMPLEX WITH DMA</scope>
    <scope>FUNCTION</scope>
    <scope>SUBUNIT</scope>
    <scope>DISULFIDE BONDS</scope>
</reference>
<reference key="16">
    <citation type="journal article" date="2006" name="J. Immunol.">
        <title>Small molecules that enhance the catalytic efficiency of HLA-DM.</title>
        <authorList>
            <person name="Nicholson M.J."/>
            <person name="Moradi B."/>
            <person name="Seth N.P."/>
            <person name="Xing X."/>
            <person name="Cuny G.D."/>
            <person name="Stein R.L."/>
            <person name="Wucherpfennig K.W."/>
        </authorList>
    </citation>
    <scope>X-RAY CRYSTALLOGRAPHY (2.27 ANGSTROMS) OF 19-218 IN COMPLEX WITH DMA</scope>
    <scope>FUNCTION</scope>
    <scope>SUBUNIT</scope>
    <scope>DISULFIDE BONDS</scope>
</reference>
<reference evidence="10 11" key="17">
    <citation type="journal article" date="2012" name="Cell">
        <title>Crystal structure of the HLA-DM-HLA-DR1 complex defines mechanisms for rapid peptide selection.</title>
        <authorList>
            <person name="Pos W."/>
            <person name="Sethi D.K."/>
            <person name="Call M.J."/>
            <person name="Schulze M.S."/>
            <person name="Anders A.K."/>
            <person name="Pyrdol J."/>
            <person name="Wucherpfennig K.W."/>
        </authorList>
    </citation>
    <scope>X-RAY CRYSTALLOGRAPHY (2.60 ANGSTROMS) OF 19-211 IN COMPLEX WITH MHCII</scope>
    <scope>SUBUNIT</scope>
    <scope>DISULFIDE BOND</scope>
    <scope>FUNCTION</scope>
    <scope>MUTAGENESIS OF GLU-26; ASP-49; GLU-65; LEU-69; ALA-73 AND ARG-128</scope>
</reference>
<protein>
    <recommendedName>
        <fullName>HLA class II histocompatibility antigen, DM beta chain</fullName>
    </recommendedName>
    <alternativeName>
        <fullName>MHC class II antigen DMB</fullName>
    </alternativeName>
    <alternativeName>
        <fullName>Really interesting new gene 7 protein</fullName>
    </alternativeName>
</protein>
<gene>
    <name type="primary">HLA-DMB</name>
    <name type="synonym">DMB</name>
    <name type="synonym">RING7</name>
</gene>
<comment type="function">
    <text evidence="4 5 7 8">Plays a critical role in catalyzing the release of class II-associated invariant chain peptide (CLIP) from newly synthesized MHC class II molecules and freeing the peptide binding site for acquisition of antigenic peptides. In B-cells, the interaction between HLA-DM and MHC class II molecules is regulated by HLA-DO.</text>
</comment>
<comment type="subunit">
    <text evidence="4 5 8">Heterodimer of an alpha chain (DMA) and a beta chain (DMB) (PubMed:16547258, PubMed:9768757). Interacts with MHCII; this interaction mediates rapid selection of high-affinity peptides in a pH-dependent manner, with an optimum at pH 5.5 (PubMed:23260142).</text>
</comment>
<comment type="interaction">
    <interactant intactId="EBI-2877138">
        <id>P28068</id>
    </interactant>
    <interactant intactId="EBI-2371151">
        <id>Q9Y2T2</id>
        <label>AP3M1</label>
    </interactant>
    <organismsDiffer>false</organismsDiffer>
    <experiments>2</experiments>
</comment>
<comment type="interaction">
    <interactant intactId="EBI-2877138">
        <id>P28068</id>
    </interactant>
    <interactant intactId="EBI-3865396">
        <id>P28067</id>
        <label>HLA-DMA</label>
    </interactant>
    <organismsDiffer>false</organismsDiffer>
    <experiments>22</experiments>
</comment>
<comment type="subcellular location">
    <subcellularLocation>
        <location evidence="6">Late endosome membrane</location>
        <topology evidence="6">Single-pass type I membrane protein</topology>
    </subcellularLocation>
    <subcellularLocation>
        <location evidence="6">Lysosome membrane</location>
        <topology evidence="6">Single-pass type I membrane protein</topology>
    </subcellularLocation>
    <text>Localizes to late endocytic compartment. Associates with lysosome membranes.</text>
</comment>
<comment type="domain">
    <text>The YXXZ (Tyr-Xaa-Xaa-Zaa, where Zaa is a hydrophobic residue) motif mediates the targeting to the lysosomal compartments.</text>
</comment>
<comment type="polymorphism">
    <text>The following alleles of DMB are known: DMB*01:01, DMB*01:02, DMB*01:03, DMB*01:04 (DMB3.4), DMB*01:05, DMB*01:06, and DMB*01:07. The sequence shown is that of DMB*01:03.</text>
</comment>
<comment type="similarity">
    <text evidence="9">Belongs to the MHC class II family.</text>
</comment>
<accession>P28068</accession>
<accession>O77936</accession>
<accession>Q13012</accession>
<accession>Q29751</accession>
<accession>Q58ZE2</accession>
<accession>Q5SNZ8</accession>
<accession>Q5STC4</accession>
<accession>Q9XRX2</accession>
<name>DMB_HUMAN</name>
<proteinExistence type="evidence at protein level"/>
<organism>
    <name type="scientific">Homo sapiens</name>
    <name type="common">Human</name>
    <dbReference type="NCBI Taxonomy" id="9606"/>
    <lineage>
        <taxon>Eukaryota</taxon>
        <taxon>Metazoa</taxon>
        <taxon>Chordata</taxon>
        <taxon>Craniata</taxon>
        <taxon>Vertebrata</taxon>
        <taxon>Euteleostomi</taxon>
        <taxon>Mammalia</taxon>
        <taxon>Eutheria</taxon>
        <taxon>Euarchontoglires</taxon>
        <taxon>Primates</taxon>
        <taxon>Haplorrhini</taxon>
        <taxon>Catarrhini</taxon>
        <taxon>Hominidae</taxon>
        <taxon>Homo</taxon>
    </lineage>
</organism>